<feature type="chain" id="PRO_0000070986" description="Co-chaperone protein HscB">
    <location>
        <begin position="1"/>
        <end position="171"/>
    </location>
</feature>
<feature type="domain" description="J" evidence="1">
    <location>
        <begin position="2"/>
        <end position="74"/>
    </location>
</feature>
<protein>
    <recommendedName>
        <fullName evidence="1">Co-chaperone protein HscB</fullName>
    </recommendedName>
    <alternativeName>
        <fullName evidence="1">Hsc20</fullName>
    </alternativeName>
</protein>
<keyword id="KW-0143">Chaperone</keyword>
<comment type="function">
    <text evidence="1">Co-chaperone involved in the maturation of iron-sulfur cluster-containing proteins. Seems to help targeting proteins to be folded toward HscA.</text>
</comment>
<comment type="subunit">
    <text evidence="1">Interacts with HscA and stimulates its ATPase activity. Interacts with IscU.</text>
</comment>
<comment type="similarity">
    <text evidence="1">Belongs to the HscB family.</text>
</comment>
<dbReference type="EMBL" id="AE017220">
    <property type="protein sequence ID" value="AAX66440.1"/>
    <property type="molecule type" value="Genomic_DNA"/>
</dbReference>
<dbReference type="RefSeq" id="WP_001540624.1">
    <property type="nucleotide sequence ID" value="NC_006905.1"/>
</dbReference>
<dbReference type="SMR" id="Q57LH2"/>
<dbReference type="KEGG" id="sec:SCH_2534"/>
<dbReference type="HOGENOM" id="CLU_068529_2_0_6"/>
<dbReference type="Proteomes" id="UP000000538">
    <property type="component" value="Chromosome"/>
</dbReference>
<dbReference type="GO" id="GO:1990230">
    <property type="term" value="C:iron-sulfur cluster transfer complex"/>
    <property type="evidence" value="ECO:0007669"/>
    <property type="project" value="TreeGrafter"/>
</dbReference>
<dbReference type="GO" id="GO:0001671">
    <property type="term" value="F:ATPase activator activity"/>
    <property type="evidence" value="ECO:0007669"/>
    <property type="project" value="InterPro"/>
</dbReference>
<dbReference type="GO" id="GO:0051087">
    <property type="term" value="F:protein-folding chaperone binding"/>
    <property type="evidence" value="ECO:0007669"/>
    <property type="project" value="InterPro"/>
</dbReference>
<dbReference type="GO" id="GO:0044571">
    <property type="term" value="P:[2Fe-2S] cluster assembly"/>
    <property type="evidence" value="ECO:0007669"/>
    <property type="project" value="InterPro"/>
</dbReference>
<dbReference type="GO" id="GO:0051259">
    <property type="term" value="P:protein complex oligomerization"/>
    <property type="evidence" value="ECO:0007669"/>
    <property type="project" value="InterPro"/>
</dbReference>
<dbReference type="GO" id="GO:0006457">
    <property type="term" value="P:protein folding"/>
    <property type="evidence" value="ECO:0007669"/>
    <property type="project" value="UniProtKB-UniRule"/>
</dbReference>
<dbReference type="CDD" id="cd06257">
    <property type="entry name" value="DnaJ"/>
    <property type="match status" value="1"/>
</dbReference>
<dbReference type="FunFam" id="1.10.287.110:FF:000008">
    <property type="entry name" value="Co-chaperone protein HscB"/>
    <property type="match status" value="1"/>
</dbReference>
<dbReference type="FunFam" id="1.20.1280.20:FF:000001">
    <property type="entry name" value="Co-chaperone protein HscB"/>
    <property type="match status" value="1"/>
</dbReference>
<dbReference type="Gene3D" id="1.10.287.110">
    <property type="entry name" value="DnaJ domain"/>
    <property type="match status" value="1"/>
</dbReference>
<dbReference type="Gene3D" id="1.20.1280.20">
    <property type="entry name" value="HscB, C-terminal domain"/>
    <property type="match status" value="1"/>
</dbReference>
<dbReference type="HAMAP" id="MF_00682">
    <property type="entry name" value="HscB"/>
    <property type="match status" value="1"/>
</dbReference>
<dbReference type="InterPro" id="IPR001623">
    <property type="entry name" value="DnaJ_domain"/>
</dbReference>
<dbReference type="InterPro" id="IPR004640">
    <property type="entry name" value="HscB"/>
</dbReference>
<dbReference type="InterPro" id="IPR036386">
    <property type="entry name" value="HscB_C_sf"/>
</dbReference>
<dbReference type="InterPro" id="IPR009073">
    <property type="entry name" value="HscB_oligo_C"/>
</dbReference>
<dbReference type="InterPro" id="IPR036869">
    <property type="entry name" value="J_dom_sf"/>
</dbReference>
<dbReference type="NCBIfam" id="TIGR00714">
    <property type="entry name" value="hscB"/>
    <property type="match status" value="1"/>
</dbReference>
<dbReference type="NCBIfam" id="NF003449">
    <property type="entry name" value="PRK05014.1"/>
    <property type="match status" value="1"/>
</dbReference>
<dbReference type="PANTHER" id="PTHR14021">
    <property type="entry name" value="IRON-SULFUR CLUSTER CO-CHAPERONE PROTEIN HSCB"/>
    <property type="match status" value="1"/>
</dbReference>
<dbReference type="PANTHER" id="PTHR14021:SF15">
    <property type="entry name" value="IRON-SULFUR CLUSTER CO-CHAPERONE PROTEIN HSCB"/>
    <property type="match status" value="1"/>
</dbReference>
<dbReference type="Pfam" id="PF07743">
    <property type="entry name" value="HSCB_C"/>
    <property type="match status" value="1"/>
</dbReference>
<dbReference type="SMART" id="SM00271">
    <property type="entry name" value="DnaJ"/>
    <property type="match status" value="1"/>
</dbReference>
<dbReference type="SUPFAM" id="SSF46565">
    <property type="entry name" value="Chaperone J-domain"/>
    <property type="match status" value="1"/>
</dbReference>
<dbReference type="SUPFAM" id="SSF47144">
    <property type="entry name" value="HSC20 (HSCB), C-terminal oligomerisation domain"/>
    <property type="match status" value="1"/>
</dbReference>
<dbReference type="PROSITE" id="PS50076">
    <property type="entry name" value="DNAJ_2"/>
    <property type="match status" value="1"/>
</dbReference>
<evidence type="ECO:0000255" key="1">
    <source>
        <dbReference type="HAMAP-Rule" id="MF_00682"/>
    </source>
</evidence>
<reference key="1">
    <citation type="journal article" date="2005" name="Nucleic Acids Res.">
        <title>The genome sequence of Salmonella enterica serovar Choleraesuis, a highly invasive and resistant zoonotic pathogen.</title>
        <authorList>
            <person name="Chiu C.-H."/>
            <person name="Tang P."/>
            <person name="Chu C."/>
            <person name="Hu S."/>
            <person name="Bao Q."/>
            <person name="Yu J."/>
            <person name="Chou Y.-Y."/>
            <person name="Wang H.-S."/>
            <person name="Lee Y.-S."/>
        </authorList>
    </citation>
    <scope>NUCLEOTIDE SEQUENCE [LARGE SCALE GENOMIC DNA]</scope>
    <source>
        <strain>SC-B67</strain>
    </source>
</reference>
<accession>Q57LH2</accession>
<gene>
    <name evidence="1" type="primary">hscB</name>
    <name type="ordered locus">SCH_2534</name>
</gene>
<organism>
    <name type="scientific">Salmonella choleraesuis (strain SC-B67)</name>
    <dbReference type="NCBI Taxonomy" id="321314"/>
    <lineage>
        <taxon>Bacteria</taxon>
        <taxon>Pseudomonadati</taxon>
        <taxon>Pseudomonadota</taxon>
        <taxon>Gammaproteobacteria</taxon>
        <taxon>Enterobacterales</taxon>
        <taxon>Enterobacteriaceae</taxon>
        <taxon>Salmonella</taxon>
    </lineage>
</organism>
<sequence>MDYFTLFGLPARYQIDTQALSLRFQDLQRQYHPDKFANGTQAQQLAAVQQSATINQAWQTLRHPLTRAEYLLSLHGFDLASEQHTVRDTAFLMEQLTLCEELDDIEQSKDDVRLESFIKRVQKMFDARLQQMVEQLDNAAWDAAADTVRKLRFLDKLRSSAEQLEEKLLDF</sequence>
<proteinExistence type="inferred from homology"/>
<name>HSCB_SALCH</name>